<sequence>FMRF</sequence>
<protein>
    <recommendedName>
        <fullName>FMRFamide</fullName>
    </recommendedName>
</protein>
<proteinExistence type="evidence at protein level"/>
<feature type="peptide" id="PRO_0000043648" description="FMRFamide">
    <location>
        <begin position="1"/>
        <end position="4"/>
    </location>
</feature>
<feature type="modified residue" description="Phenylalanine amide" evidence="1">
    <location>
        <position position="4"/>
    </location>
</feature>
<accession>P69147</accession>
<accession>P01162</accession>
<evidence type="ECO:0000269" key="1">
    <source>
    </source>
</evidence>
<evidence type="ECO:0000305" key="2"/>
<name>FMRF_HIRME</name>
<comment type="function">
    <text>Myoactive; cardioexcitatory substance. Pharmacological activities include augmentation, induction, and regularization of cardiac contraction.</text>
</comment>
<comment type="subcellular location">
    <subcellularLocation>
        <location>Secreted</location>
    </subcellularLocation>
</comment>
<comment type="similarity">
    <text evidence="2">Belongs to the FARP (FMRFamide related peptide) family.</text>
</comment>
<keyword id="KW-0027">Amidation</keyword>
<keyword id="KW-0903">Direct protein sequencing</keyword>
<keyword id="KW-0527">Neuropeptide</keyword>
<keyword id="KW-0964">Secreted</keyword>
<organism>
    <name type="scientific">Hirudo medicinalis</name>
    <name type="common">Medicinal leech</name>
    <dbReference type="NCBI Taxonomy" id="6421"/>
    <lineage>
        <taxon>Eukaryota</taxon>
        <taxon>Metazoa</taxon>
        <taxon>Spiralia</taxon>
        <taxon>Lophotrochozoa</taxon>
        <taxon>Annelida</taxon>
        <taxon>Clitellata</taxon>
        <taxon>Hirudinea</taxon>
        <taxon>Hirudinida</taxon>
        <taxon>Hirudiniformes</taxon>
        <taxon>Hirudinidae</taxon>
        <taxon>Hirudo</taxon>
    </lineage>
</organism>
<dbReference type="SMR" id="P69147"/>
<dbReference type="GO" id="GO:0005576">
    <property type="term" value="C:extracellular region"/>
    <property type="evidence" value="ECO:0007669"/>
    <property type="project" value="UniProtKB-SubCell"/>
</dbReference>
<dbReference type="GO" id="GO:0007218">
    <property type="term" value="P:neuropeptide signaling pathway"/>
    <property type="evidence" value="ECO:0007669"/>
    <property type="project" value="UniProtKB-KW"/>
</dbReference>
<reference key="1">
    <citation type="journal article" date="1991" name="Peptides">
        <title>Identification of RFamide neuropeptides in the medicinal leech.</title>
        <authorList>
            <person name="Evans B.D."/>
            <person name="Pohl J."/>
            <person name="Kartsonis M.A."/>
            <person name="Calabrese R.L."/>
        </authorList>
    </citation>
    <scope>PROTEIN SEQUENCE</scope>
    <scope>AMIDATION AT PHE-4</scope>
</reference>